<evidence type="ECO:0000250" key="1">
    <source>
        <dbReference type="UniProtKB" id="Q5YGP7"/>
    </source>
</evidence>
<evidence type="ECO:0000250" key="2">
    <source>
        <dbReference type="UniProtKB" id="Q9LND1"/>
    </source>
</evidence>
<evidence type="ECO:0000255" key="3">
    <source>
        <dbReference type="PROSITE-ProRule" id="PRU00366"/>
    </source>
</evidence>
<evidence type="ECO:0000256" key="4">
    <source>
        <dbReference type="SAM" id="MobiDB-lite"/>
    </source>
</evidence>
<evidence type="ECO:0000269" key="5">
    <source>
    </source>
</evidence>
<evidence type="ECO:0000269" key="6">
    <source>
    </source>
</evidence>
<evidence type="ECO:0000269" key="7">
    <source>
    </source>
</evidence>
<evidence type="ECO:0000269" key="8">
    <source>
    </source>
</evidence>
<evidence type="ECO:0000269" key="9">
    <source>
    </source>
</evidence>
<evidence type="ECO:0000303" key="10">
    <source>
    </source>
</evidence>
<evidence type="ECO:0000303" key="11">
    <source>
    </source>
</evidence>
<evidence type="ECO:0000305" key="12"/>
<evidence type="ECO:0000312" key="13">
    <source>
        <dbReference type="Araport" id="AT3G20840"/>
    </source>
</evidence>
<evidence type="ECO:0000312" key="14">
    <source>
        <dbReference type="EMBL" id="BAB02492.1"/>
    </source>
</evidence>
<gene>
    <name evidence="10" type="primary">PLT1</name>
    <name evidence="11" type="synonym">AIL3</name>
    <name evidence="13" type="ordered locus">At3g20840</name>
    <name evidence="14" type="ORF">MOE17.15</name>
</gene>
<comment type="function">
    <text evidence="2 5 6 8 9">Probably acts as a transcriptional activator. Binds to the GCC-box pathogenesis-related promoter element. May be involved in the regulation of gene expression by stress factors and by components of stress signal transduction pathways (By similarity). Master regulator of basal/root fate. Essential for root quiescent center (QC) and columella specification, stem cell activity, as well as for establishment of the stem cell niche during embryogenesis. Modulates the root polar auxin transport by regulating the distribution of PIN genes. Essential role in respecifying pattern and polarity in damaged roots. Direct target of the transcriptional corepressor TPL. Expression levels and patterns regulated post-transcriptionally by root meristem growth factors (RGFs).</text>
</comment>
<comment type="subcellular location">
    <subcellularLocation>
        <location evidence="12">Nucleus</location>
    </subcellularLocation>
</comment>
<comment type="tissue specificity">
    <text evidence="5 6 7 8 9">Expressed in roots, seedlings, flowers, and siliques. Also detected at low levels in leaves. In roots, specifically detected in the distal root meristem, including the QC. This tissue specificity is regulated by auxin gradient and depends on PIN proteins.</text>
</comment>
<comment type="developmental stage">
    <text evidence="5 9">Accumulates in the basal embryo region that gives rise to hypocotyl, root, and root stem cells. Expressed in the root meristem throughout embryo development.</text>
</comment>
<comment type="induction">
    <text evidence="5">By auxin accumulation.</text>
</comment>
<comment type="PTM">
    <text evidence="1">Stabilized in root meristems by reactive oxygen species (ROS) mediated oxidative post-translational modification triggered by RGF1 hormone peptide in a RITF1-dependent manner.</text>
</comment>
<comment type="similarity">
    <text evidence="12">Belongs to the AP2/ERF transcription factor family. AP2 subfamily.</text>
</comment>
<comment type="sequence caution" evidence="12">
    <conflict type="erroneous gene model prediction">
        <sequence resource="EMBL-CDS" id="BAB02492"/>
    </conflict>
</comment>
<accession>Q5YGP8</accession>
<accession>Q6PQQ6</accession>
<accession>Q9LT37</accession>
<feature type="chain" id="PRO_0000297930" description="AP2-like ethylene-responsive transcription factor PLT1">
    <location>
        <begin position="1"/>
        <end position="574"/>
    </location>
</feature>
<feature type="DNA-binding region" description="AP2/ERF 1" evidence="3">
    <location>
        <begin position="181"/>
        <end position="247"/>
    </location>
</feature>
<feature type="DNA-binding region" description="AP2/ERF 2" evidence="3">
    <location>
        <begin position="283"/>
        <end position="341"/>
    </location>
</feature>
<feature type="region of interest" description="Disordered" evidence="4">
    <location>
        <begin position="536"/>
        <end position="566"/>
    </location>
</feature>
<feature type="compositionally biased region" description="Polar residues" evidence="4">
    <location>
        <begin position="554"/>
        <end position="563"/>
    </location>
</feature>
<feature type="sequence conflict" description="In Ref. 4; AAS97939." evidence="12" ref="4">
    <original>V</original>
    <variation>L</variation>
    <location>
        <position position="347"/>
    </location>
</feature>
<sequence>MNSNNWLGFPLSPNNSSLPPHEYNLGLVSDHMDNPFQTQEWNMINPHGGGGDEGGEVPKVADFLGVSKPDENQSNHLVAYNDSDYYFHTNSLMPSVQSNDVVVAACDSNTPNNSSYHELQESAHNLQSLTLSMGTTAGNNVVDKASPSETTGDNASGGALAVVETATPRRALDTFGQRTSIYRGVTRHRWTGRYEAHLWDNSCRREGQSRKGRQVYLGGYDKEDKAARSYDLAALKYWGPSTTTNFPITNYEKEVEEMKHMTRQEFVAAIRRKSSGFSRGASMYRGVTRHHQHGRWQARIGRVAGNKDLYLGTFSTEEEAAEAYDIAAIKFRGLNAVTNFEINRYDVKAILESSTLPIGGGAAKRLKEAQALESSRKREAEMIALGSSFQYGGGSSTGSGSTSSRLQLQPYPLSIQQPLEPFLSLQNNDISHYNNNNAHDSSSFNHHSYIQTQLHLHQQTNNYLQQQSSQNSQQLYNAYLHSNPALLHGLVSTSIVDNNNNNGGSSGSYNTAAFLGNHGIGIGSSSTVGSTEEFPTVKTDYDMPSSDGTGGYSGWTSESVQGSNPGGVFTMWNE</sequence>
<keyword id="KW-0010">Activator</keyword>
<keyword id="KW-0927">Auxin signaling pathway</keyword>
<keyword id="KW-0217">Developmental protein</keyword>
<keyword id="KW-0238">DNA-binding</keyword>
<keyword id="KW-0936">Ethylene signaling pathway</keyword>
<keyword id="KW-0539">Nucleus</keyword>
<keyword id="KW-1185">Reference proteome</keyword>
<keyword id="KW-0677">Repeat</keyword>
<keyword id="KW-0346">Stress response</keyword>
<keyword id="KW-0804">Transcription</keyword>
<keyword id="KW-0805">Transcription regulation</keyword>
<dbReference type="EMBL" id="AY506549">
    <property type="protein sequence ID" value="AAS86335.1"/>
    <property type="molecule type" value="mRNA"/>
</dbReference>
<dbReference type="EMBL" id="AB025629">
    <property type="protein sequence ID" value="BAB02492.1"/>
    <property type="status" value="ALT_SEQ"/>
    <property type="molecule type" value="Genomic_DNA"/>
</dbReference>
<dbReference type="EMBL" id="CP002686">
    <property type="protein sequence ID" value="AEE76430.1"/>
    <property type="molecule type" value="Genomic_DNA"/>
</dbReference>
<dbReference type="EMBL" id="AY585682">
    <property type="protein sequence ID" value="AAS97939.1"/>
    <property type="molecule type" value="mRNA"/>
</dbReference>
<dbReference type="RefSeq" id="NP_188720.2">
    <property type="nucleotide sequence ID" value="NM_112975.3"/>
</dbReference>
<dbReference type="SMR" id="Q5YGP8"/>
<dbReference type="FunCoup" id="Q5YGP8">
    <property type="interactions" value="1"/>
</dbReference>
<dbReference type="IntAct" id="Q5YGP8">
    <property type="interactions" value="1"/>
</dbReference>
<dbReference type="STRING" id="3702.Q5YGP8"/>
<dbReference type="PaxDb" id="3702-AT3G20840.1"/>
<dbReference type="ProteomicsDB" id="234769"/>
<dbReference type="EnsemblPlants" id="AT3G20840.1">
    <property type="protein sequence ID" value="AT3G20840.1"/>
    <property type="gene ID" value="AT3G20840"/>
</dbReference>
<dbReference type="GeneID" id="821632"/>
<dbReference type="Gramene" id="AT3G20840.1">
    <property type="protein sequence ID" value="AT3G20840.1"/>
    <property type="gene ID" value="AT3G20840"/>
</dbReference>
<dbReference type="KEGG" id="ath:AT3G20840"/>
<dbReference type="Araport" id="AT3G20840"/>
<dbReference type="TAIR" id="AT3G20840">
    <property type="gene designation" value="PLT1"/>
</dbReference>
<dbReference type="eggNOG" id="ENOG502QSTN">
    <property type="taxonomic scope" value="Eukaryota"/>
</dbReference>
<dbReference type="HOGENOM" id="CLU_013549_5_0_1"/>
<dbReference type="InParanoid" id="Q5YGP8"/>
<dbReference type="OMA" id="FNHHSYI"/>
<dbReference type="PhylomeDB" id="Q5YGP8"/>
<dbReference type="PRO" id="PR:Q5YGP8"/>
<dbReference type="Proteomes" id="UP000006548">
    <property type="component" value="Chromosome 3"/>
</dbReference>
<dbReference type="ExpressionAtlas" id="Q5YGP8">
    <property type="expression patterns" value="baseline and differential"/>
</dbReference>
<dbReference type="GO" id="GO:0005634">
    <property type="term" value="C:nucleus"/>
    <property type="evidence" value="ECO:0000314"/>
    <property type="project" value="TAIR"/>
</dbReference>
<dbReference type="GO" id="GO:0003700">
    <property type="term" value="F:DNA-binding transcription factor activity"/>
    <property type="evidence" value="ECO:0000250"/>
    <property type="project" value="TAIR"/>
</dbReference>
<dbReference type="GO" id="GO:0000976">
    <property type="term" value="F:transcription cis-regulatory region binding"/>
    <property type="evidence" value="ECO:0000353"/>
    <property type="project" value="TAIR"/>
</dbReference>
<dbReference type="GO" id="GO:0009734">
    <property type="term" value="P:auxin-activated signaling pathway"/>
    <property type="evidence" value="ECO:0007669"/>
    <property type="project" value="UniProtKB-KW"/>
</dbReference>
<dbReference type="GO" id="GO:0009873">
    <property type="term" value="P:ethylene-activated signaling pathway"/>
    <property type="evidence" value="ECO:0007669"/>
    <property type="project" value="UniProtKB-KW"/>
</dbReference>
<dbReference type="GO" id="GO:0007389">
    <property type="term" value="P:pattern specification process"/>
    <property type="evidence" value="ECO:0000315"/>
    <property type="project" value="TAIR"/>
</dbReference>
<dbReference type="GO" id="GO:0048364">
    <property type="term" value="P:root development"/>
    <property type="evidence" value="ECO:0000315"/>
    <property type="project" value="TAIR"/>
</dbReference>
<dbReference type="GO" id="GO:0010449">
    <property type="term" value="P:root meristem growth"/>
    <property type="evidence" value="ECO:0000316"/>
    <property type="project" value="TAIR"/>
</dbReference>
<dbReference type="GO" id="GO:0019827">
    <property type="term" value="P:stem cell population maintenance"/>
    <property type="evidence" value="ECO:0000315"/>
    <property type="project" value="TAIR"/>
</dbReference>
<dbReference type="GO" id="GO:0000723">
    <property type="term" value="P:telomere maintenance"/>
    <property type="evidence" value="ECO:0000314"/>
    <property type="project" value="TAIR"/>
</dbReference>
<dbReference type="CDD" id="cd00018">
    <property type="entry name" value="AP2"/>
    <property type="match status" value="2"/>
</dbReference>
<dbReference type="FunFam" id="3.30.730.10:FF:000002">
    <property type="entry name" value="AP2-like ethylene-responsive transcription factor"/>
    <property type="match status" value="1"/>
</dbReference>
<dbReference type="FunFam" id="3.30.730.10:FF:000003">
    <property type="entry name" value="AP2-like ethylene-responsive transcription factor ANT"/>
    <property type="match status" value="1"/>
</dbReference>
<dbReference type="Gene3D" id="3.30.730.10">
    <property type="entry name" value="AP2/ERF domain"/>
    <property type="match status" value="2"/>
</dbReference>
<dbReference type="InterPro" id="IPR001471">
    <property type="entry name" value="AP2/ERF_dom"/>
</dbReference>
<dbReference type="InterPro" id="IPR036955">
    <property type="entry name" value="AP2/ERF_dom_sf"/>
</dbReference>
<dbReference type="InterPro" id="IPR016177">
    <property type="entry name" value="DNA-bd_dom_sf"/>
</dbReference>
<dbReference type="PANTHER" id="PTHR32467">
    <property type="entry name" value="AP2-LIKE ETHYLENE-RESPONSIVE TRANSCRIPTION FACTOR"/>
    <property type="match status" value="1"/>
</dbReference>
<dbReference type="PANTHER" id="PTHR32467:SF135">
    <property type="entry name" value="AP2-LIKE ETHYLENE-RESPONSIVE TRANSCRIPTION FACTOR PLT1"/>
    <property type="match status" value="1"/>
</dbReference>
<dbReference type="Pfam" id="PF00847">
    <property type="entry name" value="AP2"/>
    <property type="match status" value="2"/>
</dbReference>
<dbReference type="PRINTS" id="PR00367">
    <property type="entry name" value="ETHRSPELEMNT"/>
</dbReference>
<dbReference type="SMART" id="SM00380">
    <property type="entry name" value="AP2"/>
    <property type="match status" value="2"/>
</dbReference>
<dbReference type="SUPFAM" id="SSF54171">
    <property type="entry name" value="DNA-binding domain"/>
    <property type="match status" value="2"/>
</dbReference>
<dbReference type="PROSITE" id="PS51032">
    <property type="entry name" value="AP2_ERF"/>
    <property type="match status" value="2"/>
</dbReference>
<proteinExistence type="evidence at transcript level"/>
<reference key="1">
    <citation type="journal article" date="2004" name="Cell">
        <title>The PLETHORA genes mediate patterning of the Arabidopsis root stem cell niche.</title>
        <authorList>
            <person name="Aida M."/>
            <person name="Beis D."/>
            <person name="Heidstra R."/>
            <person name="Willemsen V."/>
            <person name="Blilou I."/>
            <person name="Galinha C."/>
            <person name="Nussaume L."/>
            <person name="Noh Y.-S."/>
            <person name="Amasino R."/>
            <person name="Scheres B."/>
        </authorList>
    </citation>
    <scope>NUCLEOTIDE SEQUENCE [MRNA]</scope>
    <scope>FUNCTION</scope>
    <scope>TISSUE SPECIFICITY</scope>
    <scope>DEVELOPMENTAL STAGE</scope>
    <scope>INDUCTION</scope>
    <source>
        <strain>cv. Columbia</strain>
    </source>
</reference>
<reference key="2">
    <citation type="journal article" date="2000" name="DNA Res.">
        <title>Structural analysis of Arabidopsis thaliana chromosome 3. I. Sequence features of the regions of 4,504,864 bp covered by sixty P1 and TAC clones.</title>
        <authorList>
            <person name="Sato S."/>
            <person name="Nakamura Y."/>
            <person name="Kaneko T."/>
            <person name="Katoh T."/>
            <person name="Asamizu E."/>
            <person name="Tabata S."/>
        </authorList>
    </citation>
    <scope>NUCLEOTIDE SEQUENCE [LARGE SCALE GENOMIC DNA]</scope>
    <source>
        <strain>cv. Columbia</strain>
    </source>
</reference>
<reference key="3">
    <citation type="journal article" date="2017" name="Plant J.">
        <title>Araport11: a complete reannotation of the Arabidopsis thaliana reference genome.</title>
        <authorList>
            <person name="Cheng C.Y."/>
            <person name="Krishnakumar V."/>
            <person name="Chan A.P."/>
            <person name="Thibaud-Nissen F."/>
            <person name="Schobel S."/>
            <person name="Town C.D."/>
        </authorList>
    </citation>
    <scope>GENOME REANNOTATION</scope>
    <source>
        <strain>cv. Columbia</strain>
    </source>
</reference>
<reference key="4">
    <citation type="submission" date="2004-03" db="EMBL/GenBank/DDBJ databases">
        <title>Molecular cloning, expression, phylogenetic and functional characterization of the Arabidopsis AP2/EREBP transcription factor family.</title>
        <authorList>
            <person name="Pan Y."/>
            <person name="Gong W."/>
            <person name="Liu D."/>
            <person name="Fu Q."/>
            <person name="Mei W.-Q."/>
            <person name="Song W.-Q."/>
            <person name="Ma L.-G."/>
            <person name="Luo J.-C."/>
            <person name="Deng X.-W."/>
            <person name="Zhu Y.-X."/>
        </authorList>
    </citation>
    <scope>NUCLEOTIDE SEQUENCE [MRNA] OF 43-574</scope>
</reference>
<reference key="5">
    <citation type="journal article" date="2005" name="Nature">
        <title>The PIN auxin efflux facilitator network controls growth and patterning in Arabidopsis roots.</title>
        <authorList>
            <person name="Blilou I."/>
            <person name="Xu J."/>
            <person name="Wildwater M."/>
            <person name="Willemsen V."/>
            <person name="Paponov I."/>
            <person name="Friml J."/>
            <person name="Heidstra R."/>
            <person name="Aida M."/>
            <person name="Palme K."/>
            <person name="Scheres B."/>
        </authorList>
    </citation>
    <scope>FUNCTION</scope>
    <scope>TISSUE SPECIFICITY</scope>
</reference>
<reference key="6">
    <citation type="journal article" date="2005" name="Plant Mol. Biol.">
        <title>AINTEGUMENTA-like (AIL) genes are expressed in young tissues and may specify meristematic or division-competent states.</title>
        <authorList>
            <person name="Nole-Wilson S."/>
            <person name="Tranby T.L."/>
            <person name="Krizek B.A."/>
        </authorList>
    </citation>
    <scope>TISSUE SPECIFICITY</scope>
</reference>
<reference key="7">
    <citation type="journal article" date="2006" name="Plant Physiol.">
        <title>Genome-wide analysis of the ERF gene family in Arabidopsis and rice.</title>
        <authorList>
            <person name="Nakano T."/>
            <person name="Suzuki K."/>
            <person name="Fujimura T."/>
            <person name="Shinshi H."/>
        </authorList>
    </citation>
    <scope>GENE FAMILY</scope>
    <scope>NOMENCLATURE</scope>
</reference>
<reference key="8">
    <citation type="journal article" date="2006" name="Science">
        <title>A molecular framework for plant regeneration.</title>
        <authorList>
            <person name="Xu J."/>
            <person name="Hofhuis H."/>
            <person name="Heidstra R."/>
            <person name="Sauer M."/>
            <person name="Friml J."/>
            <person name="Scheres B."/>
        </authorList>
    </citation>
    <scope>FUNCTION</scope>
    <scope>TISSUE SPECIFICITY</scope>
</reference>
<reference key="9">
    <citation type="journal article" date="2010" name="Nature">
        <title>Control of Arabidopsis apical-basal embryo polarity by antagonistic transcription factors.</title>
        <authorList>
            <person name="Smith Z.R."/>
            <person name="Long J.A."/>
        </authorList>
    </citation>
    <scope>FUNCTION</scope>
    <scope>TISSUE SPECIFICITY</scope>
    <scope>DEVELOPMENTAL STAGE</scope>
</reference>
<reference key="10">
    <citation type="journal article" date="2010" name="Science">
        <title>Secreted peptide signals required for maintenance of root stem cell niche in Arabidopsis.</title>
        <authorList>
            <person name="Matsuzaki Y."/>
            <person name="Ogawa-Ohnishi M."/>
            <person name="Mori A."/>
            <person name="Matsubayashi Y."/>
        </authorList>
    </citation>
    <scope>REGULATION BY RGF</scope>
</reference>
<name>PLET1_ARATH</name>
<protein>
    <recommendedName>
        <fullName evidence="10">AP2-like ethylene-responsive transcription factor PLT1</fullName>
    </recommendedName>
    <alternativeName>
        <fullName evidence="11">Protein AINTEGUMENTA-LIKE 3</fullName>
    </alternativeName>
    <alternativeName>
        <fullName evidence="10">Protein PLETHORA 1</fullName>
    </alternativeName>
</protein>
<organism>
    <name type="scientific">Arabidopsis thaliana</name>
    <name type="common">Mouse-ear cress</name>
    <dbReference type="NCBI Taxonomy" id="3702"/>
    <lineage>
        <taxon>Eukaryota</taxon>
        <taxon>Viridiplantae</taxon>
        <taxon>Streptophyta</taxon>
        <taxon>Embryophyta</taxon>
        <taxon>Tracheophyta</taxon>
        <taxon>Spermatophyta</taxon>
        <taxon>Magnoliopsida</taxon>
        <taxon>eudicotyledons</taxon>
        <taxon>Gunneridae</taxon>
        <taxon>Pentapetalae</taxon>
        <taxon>rosids</taxon>
        <taxon>malvids</taxon>
        <taxon>Brassicales</taxon>
        <taxon>Brassicaceae</taxon>
        <taxon>Camelineae</taxon>
        <taxon>Arabidopsis</taxon>
    </lineage>
</organism>